<organism>
    <name type="scientific">Haemophilus influenzae (strain ATCC 51907 / DSM 11121 / KW20 / Rd)</name>
    <dbReference type="NCBI Taxonomy" id="71421"/>
    <lineage>
        <taxon>Bacteria</taxon>
        <taxon>Pseudomonadati</taxon>
        <taxon>Pseudomonadota</taxon>
        <taxon>Gammaproteobacteria</taxon>
        <taxon>Pasteurellales</taxon>
        <taxon>Pasteurellaceae</taxon>
        <taxon>Haemophilus</taxon>
    </lineage>
</organism>
<keyword id="KW-0472">Membrane</keyword>
<keyword id="KW-1185">Reference proteome</keyword>
<keyword id="KW-0812">Transmembrane</keyword>
<keyword id="KW-1133">Transmembrane helix</keyword>
<sequence length="146" mass="17054">MIWIFFVIALFLVTGLTLYAIRLLKQLKVQKELIAKAKNNRVIRLKESIDIIARAMQSGECNLSEGVMRLTMLLRPFGKNLSSYPAMANLYEVVRDMPTHDDRKLLEKRERMRLDLARESAEAQFEKNIKQELYILLEDIKSIELI</sequence>
<comment type="subcellular location">
    <subcellularLocation>
        <location evidence="2">Membrane</location>
        <topology evidence="2">Single-pass membrane protein</topology>
    </subcellularLocation>
</comment>
<reference key="1">
    <citation type="journal article" date="1995" name="Science">
        <title>Whole-genome random sequencing and assembly of Haemophilus influenzae Rd.</title>
        <authorList>
            <person name="Fleischmann R.D."/>
            <person name="Adams M.D."/>
            <person name="White O."/>
            <person name="Clayton R.A."/>
            <person name="Kirkness E.F."/>
            <person name="Kerlavage A.R."/>
            <person name="Bult C.J."/>
            <person name="Tomb J.-F."/>
            <person name="Dougherty B.A."/>
            <person name="Merrick J.M."/>
            <person name="McKenney K."/>
            <person name="Sutton G.G."/>
            <person name="FitzHugh W."/>
            <person name="Fields C.A."/>
            <person name="Gocayne J.D."/>
            <person name="Scott J.D."/>
            <person name="Shirley R."/>
            <person name="Liu L.-I."/>
            <person name="Glodek A."/>
            <person name="Kelley J.M."/>
            <person name="Weidman J.F."/>
            <person name="Phillips C.A."/>
            <person name="Spriggs T."/>
            <person name="Hedblom E."/>
            <person name="Cotton M.D."/>
            <person name="Utterback T.R."/>
            <person name="Hanna M.C."/>
            <person name="Nguyen D.T."/>
            <person name="Saudek D.M."/>
            <person name="Brandon R.C."/>
            <person name="Fine L.D."/>
            <person name="Fritchman J.L."/>
            <person name="Fuhrmann J.L."/>
            <person name="Geoghagen N.S.M."/>
            <person name="Gnehm C.L."/>
            <person name="McDonald L.A."/>
            <person name="Small K.V."/>
            <person name="Fraser C.M."/>
            <person name="Smith H.O."/>
            <person name="Venter J.C."/>
        </authorList>
    </citation>
    <scope>NUCLEOTIDE SEQUENCE [LARGE SCALE GENOMIC DNA]</scope>
    <source>
        <strain>ATCC 51907 / DSM 11121 / KW20 / Rd</strain>
    </source>
</reference>
<proteinExistence type="predicted"/>
<feature type="chain" id="PRO_0000077950" description="Uncharacterized protein HI_0725">
    <location>
        <begin position="1"/>
        <end position="146"/>
    </location>
</feature>
<feature type="transmembrane region" description="Helical" evidence="1">
    <location>
        <begin position="7"/>
        <end position="24"/>
    </location>
</feature>
<protein>
    <recommendedName>
        <fullName>Uncharacterized protein HI_0725</fullName>
    </recommendedName>
</protein>
<dbReference type="EMBL" id="L42023">
    <property type="protein sequence ID" value="AAC22383.1"/>
    <property type="molecule type" value="Genomic_DNA"/>
</dbReference>
<dbReference type="PIR" id="G64012">
    <property type="entry name" value="G64012"/>
</dbReference>
<dbReference type="RefSeq" id="NP_438883.1">
    <property type="nucleotide sequence ID" value="NC_000907.1"/>
</dbReference>
<dbReference type="SMR" id="P44043"/>
<dbReference type="STRING" id="71421.HI_0725"/>
<dbReference type="EnsemblBacteria" id="AAC22383">
    <property type="protein sequence ID" value="AAC22383"/>
    <property type="gene ID" value="HI_0725"/>
</dbReference>
<dbReference type="KEGG" id="hin:HI_0725"/>
<dbReference type="PATRIC" id="fig|71421.8.peg.757"/>
<dbReference type="eggNOG" id="ENOG50332QM">
    <property type="taxonomic scope" value="Bacteria"/>
</dbReference>
<dbReference type="HOGENOM" id="CLU_136762_0_0_6"/>
<dbReference type="OrthoDB" id="5293867at2"/>
<dbReference type="BioCyc" id="HINF71421:G1GJ1-764-MONOMER"/>
<dbReference type="Proteomes" id="UP000000579">
    <property type="component" value="Chromosome"/>
</dbReference>
<dbReference type="GO" id="GO:0016020">
    <property type="term" value="C:membrane"/>
    <property type="evidence" value="ECO:0007669"/>
    <property type="project" value="UniProtKB-SubCell"/>
</dbReference>
<dbReference type="InterPro" id="IPR019617">
    <property type="entry name" value="DUF2489"/>
</dbReference>
<dbReference type="Pfam" id="PF10675">
    <property type="entry name" value="DUF2489"/>
    <property type="match status" value="1"/>
</dbReference>
<evidence type="ECO:0000255" key="1"/>
<evidence type="ECO:0000305" key="2"/>
<accession>P44043</accession>
<gene>
    <name type="ordered locus">HI_0725</name>
</gene>
<name>Y725_HAEIN</name>